<comment type="function">
    <text evidence="1">Binds specifically to cytosolic chaperonin (c-CPN) and transfers target proteins to it. Binds to nascent polypeptide chain and promotes folding in an environment in which there are many competing pathways for nonnative proteins (By similarity).</text>
</comment>
<comment type="subunit">
    <text evidence="1">Heterohexamer of two PFD-alpha type and four PFD-beta type subunits.</text>
</comment>
<comment type="similarity">
    <text evidence="2">Belongs to the prefoldin subunit beta family.</text>
</comment>
<name>PFD4_DROME</name>
<sequence>MAAKVASGTNKVFQNHDDVHISFEDQQRINRFAKHNARMDDFKAELETKRNELKSLEEALEEIELFDEDEDIPFLVGEVFLSHKLEKTQDMLKETKEQVLKEIAGVEAKAKVIKAEMDELKAHLYQRFGSNISLEAED</sequence>
<dbReference type="EMBL" id="AE014296">
    <property type="protein sequence ID" value="AAF50782.1"/>
    <property type="molecule type" value="Genomic_DNA"/>
</dbReference>
<dbReference type="RefSeq" id="NP_647961.1">
    <property type="nucleotide sequence ID" value="NM_139704.2"/>
</dbReference>
<dbReference type="SMR" id="Q9VRL3"/>
<dbReference type="BioGRID" id="64081">
    <property type="interactions" value="9"/>
</dbReference>
<dbReference type="ComplexPortal" id="CPX-2389">
    <property type="entry name" value="Prefoldin co-chaperone complex"/>
</dbReference>
<dbReference type="DIP" id="DIP-18570N"/>
<dbReference type="FunCoup" id="Q9VRL3">
    <property type="interactions" value="1476"/>
</dbReference>
<dbReference type="IntAct" id="Q9VRL3">
    <property type="interactions" value="8"/>
</dbReference>
<dbReference type="STRING" id="7227.FBpp0076858"/>
<dbReference type="PaxDb" id="7227-FBpp0076858"/>
<dbReference type="DNASU" id="38615"/>
<dbReference type="EnsemblMetazoa" id="FBtr0077154">
    <property type="protein sequence ID" value="FBpp0076858"/>
    <property type="gene ID" value="FBgn0035603"/>
</dbReference>
<dbReference type="GeneID" id="38615"/>
<dbReference type="KEGG" id="dme:Dmel_CG10635"/>
<dbReference type="UCSC" id="CG10635-RA">
    <property type="organism name" value="d. melanogaster"/>
</dbReference>
<dbReference type="AGR" id="FB:FBgn0035603"/>
<dbReference type="CTD" id="5203"/>
<dbReference type="FlyBase" id="FBgn0035603">
    <property type="gene designation" value="Pfdn4"/>
</dbReference>
<dbReference type="VEuPathDB" id="VectorBase:FBgn0035603"/>
<dbReference type="eggNOG" id="KOG1760">
    <property type="taxonomic scope" value="Eukaryota"/>
</dbReference>
<dbReference type="GeneTree" id="ENSGT00390000006696"/>
<dbReference type="HOGENOM" id="CLU_130032_0_0_1"/>
<dbReference type="InParanoid" id="Q9VRL3"/>
<dbReference type="OMA" id="KFGRAIN"/>
<dbReference type="OrthoDB" id="10250441at2759"/>
<dbReference type="PhylomeDB" id="Q9VRL3"/>
<dbReference type="BioGRID-ORCS" id="38615">
    <property type="hits" value="0 hits in 1 CRISPR screen"/>
</dbReference>
<dbReference type="GenomeRNAi" id="38615"/>
<dbReference type="PRO" id="PR:Q9VRL3"/>
<dbReference type="Proteomes" id="UP000000803">
    <property type="component" value="Chromosome 3L"/>
</dbReference>
<dbReference type="Bgee" id="FBgn0035603">
    <property type="expression patterns" value="Expressed in adult class III enteroendocrine cell in adult midgut (Drosophila) and 132 other cell types or tissues"/>
</dbReference>
<dbReference type="ExpressionAtlas" id="Q9VRL3">
    <property type="expression patterns" value="baseline and differential"/>
</dbReference>
<dbReference type="GO" id="GO:0005737">
    <property type="term" value="C:cytoplasm"/>
    <property type="evidence" value="ECO:0000318"/>
    <property type="project" value="GO_Central"/>
</dbReference>
<dbReference type="GO" id="GO:0016272">
    <property type="term" value="C:prefoldin complex"/>
    <property type="evidence" value="ECO:0000318"/>
    <property type="project" value="GO_Central"/>
</dbReference>
<dbReference type="GO" id="GO:0051082">
    <property type="term" value="F:unfolded protein binding"/>
    <property type="evidence" value="ECO:0000318"/>
    <property type="project" value="GO_Central"/>
</dbReference>
<dbReference type="GO" id="GO:0006457">
    <property type="term" value="P:protein folding"/>
    <property type="evidence" value="ECO:0000318"/>
    <property type="project" value="GO_Central"/>
</dbReference>
<dbReference type="CDD" id="cd23165">
    <property type="entry name" value="Prefoldin_4"/>
    <property type="match status" value="1"/>
</dbReference>
<dbReference type="FunFam" id="1.10.287.370:FF:000005">
    <property type="entry name" value="Prefoldin subunit 4"/>
    <property type="match status" value="1"/>
</dbReference>
<dbReference type="Gene3D" id="1.10.287.370">
    <property type="match status" value="1"/>
</dbReference>
<dbReference type="InterPro" id="IPR002777">
    <property type="entry name" value="PFD_beta-like"/>
</dbReference>
<dbReference type="InterPro" id="IPR016661">
    <property type="entry name" value="PFDN4"/>
</dbReference>
<dbReference type="InterPro" id="IPR009053">
    <property type="entry name" value="Prefoldin"/>
</dbReference>
<dbReference type="PANTHER" id="PTHR21100">
    <property type="entry name" value="PREFOLDIN SUBUNIT 4"/>
    <property type="match status" value="1"/>
</dbReference>
<dbReference type="PANTHER" id="PTHR21100:SF9">
    <property type="entry name" value="PREFOLDIN SUBUNIT 4"/>
    <property type="match status" value="1"/>
</dbReference>
<dbReference type="Pfam" id="PF01920">
    <property type="entry name" value="Prefoldin_2"/>
    <property type="match status" value="1"/>
</dbReference>
<dbReference type="PIRSF" id="PIRSF016477">
    <property type="entry name" value="Prefoldin_subunit_4"/>
    <property type="match status" value="1"/>
</dbReference>
<dbReference type="SUPFAM" id="SSF46579">
    <property type="entry name" value="Prefoldin"/>
    <property type="match status" value="1"/>
</dbReference>
<feature type="chain" id="PRO_0000124844" description="Probable prefoldin subunit 4">
    <location>
        <begin position="1"/>
        <end position="138"/>
    </location>
</feature>
<accession>Q9VRL3</accession>
<gene>
    <name evidence="3" type="primary">Pfdn4</name>
    <name evidence="3" type="ORF">CG10635</name>
</gene>
<proteinExistence type="inferred from homology"/>
<evidence type="ECO:0000250" key="1"/>
<evidence type="ECO:0000305" key="2"/>
<evidence type="ECO:0000312" key="3">
    <source>
        <dbReference type="FlyBase" id="FBgn0035603"/>
    </source>
</evidence>
<protein>
    <recommendedName>
        <fullName>Probable prefoldin subunit 4</fullName>
    </recommendedName>
</protein>
<organism>
    <name type="scientific">Drosophila melanogaster</name>
    <name type="common">Fruit fly</name>
    <dbReference type="NCBI Taxonomy" id="7227"/>
    <lineage>
        <taxon>Eukaryota</taxon>
        <taxon>Metazoa</taxon>
        <taxon>Ecdysozoa</taxon>
        <taxon>Arthropoda</taxon>
        <taxon>Hexapoda</taxon>
        <taxon>Insecta</taxon>
        <taxon>Pterygota</taxon>
        <taxon>Neoptera</taxon>
        <taxon>Endopterygota</taxon>
        <taxon>Diptera</taxon>
        <taxon>Brachycera</taxon>
        <taxon>Muscomorpha</taxon>
        <taxon>Ephydroidea</taxon>
        <taxon>Drosophilidae</taxon>
        <taxon>Drosophila</taxon>
        <taxon>Sophophora</taxon>
    </lineage>
</organism>
<keyword id="KW-0143">Chaperone</keyword>
<keyword id="KW-1185">Reference proteome</keyword>
<reference key="1">
    <citation type="journal article" date="2000" name="Science">
        <title>The genome sequence of Drosophila melanogaster.</title>
        <authorList>
            <person name="Adams M.D."/>
            <person name="Celniker S.E."/>
            <person name="Holt R.A."/>
            <person name="Evans C.A."/>
            <person name="Gocayne J.D."/>
            <person name="Amanatides P.G."/>
            <person name="Scherer S.E."/>
            <person name="Li P.W."/>
            <person name="Hoskins R.A."/>
            <person name="Galle R.F."/>
            <person name="George R.A."/>
            <person name="Lewis S.E."/>
            <person name="Richards S."/>
            <person name="Ashburner M."/>
            <person name="Henderson S.N."/>
            <person name="Sutton G.G."/>
            <person name="Wortman J.R."/>
            <person name="Yandell M.D."/>
            <person name="Zhang Q."/>
            <person name="Chen L.X."/>
            <person name="Brandon R.C."/>
            <person name="Rogers Y.-H.C."/>
            <person name="Blazej R.G."/>
            <person name="Champe M."/>
            <person name="Pfeiffer B.D."/>
            <person name="Wan K.H."/>
            <person name="Doyle C."/>
            <person name="Baxter E.G."/>
            <person name="Helt G."/>
            <person name="Nelson C.R."/>
            <person name="Miklos G.L.G."/>
            <person name="Abril J.F."/>
            <person name="Agbayani A."/>
            <person name="An H.-J."/>
            <person name="Andrews-Pfannkoch C."/>
            <person name="Baldwin D."/>
            <person name="Ballew R.M."/>
            <person name="Basu A."/>
            <person name="Baxendale J."/>
            <person name="Bayraktaroglu L."/>
            <person name="Beasley E.M."/>
            <person name="Beeson K.Y."/>
            <person name="Benos P.V."/>
            <person name="Berman B.P."/>
            <person name="Bhandari D."/>
            <person name="Bolshakov S."/>
            <person name="Borkova D."/>
            <person name="Botchan M.R."/>
            <person name="Bouck J."/>
            <person name="Brokstein P."/>
            <person name="Brottier P."/>
            <person name="Burtis K.C."/>
            <person name="Busam D.A."/>
            <person name="Butler H."/>
            <person name="Cadieu E."/>
            <person name="Center A."/>
            <person name="Chandra I."/>
            <person name="Cherry J.M."/>
            <person name="Cawley S."/>
            <person name="Dahlke C."/>
            <person name="Davenport L.B."/>
            <person name="Davies P."/>
            <person name="de Pablos B."/>
            <person name="Delcher A."/>
            <person name="Deng Z."/>
            <person name="Mays A.D."/>
            <person name="Dew I."/>
            <person name="Dietz S.M."/>
            <person name="Dodson K."/>
            <person name="Doup L.E."/>
            <person name="Downes M."/>
            <person name="Dugan-Rocha S."/>
            <person name="Dunkov B.C."/>
            <person name="Dunn P."/>
            <person name="Durbin K.J."/>
            <person name="Evangelista C.C."/>
            <person name="Ferraz C."/>
            <person name="Ferriera S."/>
            <person name="Fleischmann W."/>
            <person name="Fosler C."/>
            <person name="Gabrielian A.E."/>
            <person name="Garg N.S."/>
            <person name="Gelbart W.M."/>
            <person name="Glasser K."/>
            <person name="Glodek A."/>
            <person name="Gong F."/>
            <person name="Gorrell J.H."/>
            <person name="Gu Z."/>
            <person name="Guan P."/>
            <person name="Harris M."/>
            <person name="Harris N.L."/>
            <person name="Harvey D.A."/>
            <person name="Heiman T.J."/>
            <person name="Hernandez J.R."/>
            <person name="Houck J."/>
            <person name="Hostin D."/>
            <person name="Houston K.A."/>
            <person name="Howland T.J."/>
            <person name="Wei M.-H."/>
            <person name="Ibegwam C."/>
            <person name="Jalali M."/>
            <person name="Kalush F."/>
            <person name="Karpen G.H."/>
            <person name="Ke Z."/>
            <person name="Kennison J.A."/>
            <person name="Ketchum K.A."/>
            <person name="Kimmel B.E."/>
            <person name="Kodira C.D."/>
            <person name="Kraft C.L."/>
            <person name="Kravitz S."/>
            <person name="Kulp D."/>
            <person name="Lai Z."/>
            <person name="Lasko P."/>
            <person name="Lei Y."/>
            <person name="Levitsky A.A."/>
            <person name="Li J.H."/>
            <person name="Li Z."/>
            <person name="Liang Y."/>
            <person name="Lin X."/>
            <person name="Liu X."/>
            <person name="Mattei B."/>
            <person name="McIntosh T.C."/>
            <person name="McLeod M.P."/>
            <person name="McPherson D."/>
            <person name="Merkulov G."/>
            <person name="Milshina N.V."/>
            <person name="Mobarry C."/>
            <person name="Morris J."/>
            <person name="Moshrefi A."/>
            <person name="Mount S.M."/>
            <person name="Moy M."/>
            <person name="Murphy B."/>
            <person name="Murphy L."/>
            <person name="Muzny D.M."/>
            <person name="Nelson D.L."/>
            <person name="Nelson D.R."/>
            <person name="Nelson K.A."/>
            <person name="Nixon K."/>
            <person name="Nusskern D.R."/>
            <person name="Pacleb J.M."/>
            <person name="Palazzolo M."/>
            <person name="Pittman G.S."/>
            <person name="Pan S."/>
            <person name="Pollard J."/>
            <person name="Puri V."/>
            <person name="Reese M.G."/>
            <person name="Reinert K."/>
            <person name="Remington K."/>
            <person name="Saunders R.D.C."/>
            <person name="Scheeler F."/>
            <person name="Shen H."/>
            <person name="Shue B.C."/>
            <person name="Siden-Kiamos I."/>
            <person name="Simpson M."/>
            <person name="Skupski M.P."/>
            <person name="Smith T.J."/>
            <person name="Spier E."/>
            <person name="Spradling A.C."/>
            <person name="Stapleton M."/>
            <person name="Strong R."/>
            <person name="Sun E."/>
            <person name="Svirskas R."/>
            <person name="Tector C."/>
            <person name="Turner R."/>
            <person name="Venter E."/>
            <person name="Wang A.H."/>
            <person name="Wang X."/>
            <person name="Wang Z.-Y."/>
            <person name="Wassarman D.A."/>
            <person name="Weinstock G.M."/>
            <person name="Weissenbach J."/>
            <person name="Williams S.M."/>
            <person name="Woodage T."/>
            <person name="Worley K.C."/>
            <person name="Wu D."/>
            <person name="Yang S."/>
            <person name="Yao Q.A."/>
            <person name="Ye J."/>
            <person name="Yeh R.-F."/>
            <person name="Zaveri J.S."/>
            <person name="Zhan M."/>
            <person name="Zhang G."/>
            <person name="Zhao Q."/>
            <person name="Zheng L."/>
            <person name="Zheng X.H."/>
            <person name="Zhong F.N."/>
            <person name="Zhong W."/>
            <person name="Zhou X."/>
            <person name="Zhu S.C."/>
            <person name="Zhu X."/>
            <person name="Smith H.O."/>
            <person name="Gibbs R.A."/>
            <person name="Myers E.W."/>
            <person name="Rubin G.M."/>
            <person name="Venter J.C."/>
        </authorList>
    </citation>
    <scope>NUCLEOTIDE SEQUENCE [LARGE SCALE GENOMIC DNA]</scope>
    <source>
        <strain>Berkeley</strain>
    </source>
</reference>
<reference key="2">
    <citation type="journal article" date="2002" name="Genome Biol.">
        <title>Annotation of the Drosophila melanogaster euchromatic genome: a systematic review.</title>
        <authorList>
            <person name="Misra S."/>
            <person name="Crosby M.A."/>
            <person name="Mungall C.J."/>
            <person name="Matthews B.B."/>
            <person name="Campbell K.S."/>
            <person name="Hradecky P."/>
            <person name="Huang Y."/>
            <person name="Kaminker J.S."/>
            <person name="Millburn G.H."/>
            <person name="Prochnik S.E."/>
            <person name="Smith C.D."/>
            <person name="Tupy J.L."/>
            <person name="Whitfield E.J."/>
            <person name="Bayraktaroglu L."/>
            <person name="Berman B.P."/>
            <person name="Bettencourt B.R."/>
            <person name="Celniker S.E."/>
            <person name="de Grey A.D.N.J."/>
            <person name="Drysdale R.A."/>
            <person name="Harris N.L."/>
            <person name="Richter J."/>
            <person name="Russo S."/>
            <person name="Schroeder A.J."/>
            <person name="Shu S.Q."/>
            <person name="Stapleton M."/>
            <person name="Yamada C."/>
            <person name="Ashburner M."/>
            <person name="Gelbart W.M."/>
            <person name="Rubin G.M."/>
            <person name="Lewis S.E."/>
        </authorList>
    </citation>
    <scope>GENOME REANNOTATION</scope>
    <source>
        <strain>Berkeley</strain>
    </source>
</reference>